<accession>Q4UKH2</accession>
<sequence>MNKTEFIAFMTDHGHNHKHASHKTLTKADAEKALNLVLDSVISAIKSHHNINITGFGSFEIHHRKAREGRNPKTGAKMKIDAYNQPTFRAGRKMKEACN</sequence>
<evidence type="ECO:0000250" key="1"/>
<evidence type="ECO:0000256" key="2">
    <source>
        <dbReference type="SAM" id="MobiDB-lite"/>
    </source>
</evidence>
<evidence type="ECO:0000305" key="3"/>
<protein>
    <recommendedName>
        <fullName>DNA-binding protein HU</fullName>
    </recommendedName>
</protein>
<gene>
    <name type="primary">hup</name>
    <name type="synonym">hupA</name>
    <name type="ordered locus">RF_1108</name>
</gene>
<comment type="function">
    <text evidence="1">Histone-like DNA-binding protein which is capable of wrapping DNA to stabilize it, and thus to prevent its denaturation under extreme environmental conditions.</text>
</comment>
<comment type="subunit">
    <text evidence="1">Homodimer.</text>
</comment>
<comment type="similarity">
    <text evidence="3">Belongs to the bacterial histone-like protein family.</text>
</comment>
<comment type="sequence caution" evidence="3">
    <conflict type="erroneous initiation">
        <sequence resource="EMBL-CDS" id="AAY61959"/>
    </conflict>
</comment>
<feature type="chain" id="PRO_0000273733" description="DNA-binding protein HU">
    <location>
        <begin position="1"/>
        <end position="99"/>
    </location>
</feature>
<feature type="region of interest" description="Disordered" evidence="2">
    <location>
        <begin position="67"/>
        <end position="86"/>
    </location>
</feature>
<proteinExistence type="inferred from homology"/>
<keyword id="KW-0226">DNA condensation</keyword>
<keyword id="KW-0238">DNA-binding</keyword>
<name>DBH_RICFE</name>
<dbReference type="EMBL" id="CP000053">
    <property type="protein sequence ID" value="AAY61959.1"/>
    <property type="status" value="ALT_INIT"/>
    <property type="molecule type" value="Genomic_DNA"/>
</dbReference>
<dbReference type="SMR" id="Q4UKH2"/>
<dbReference type="STRING" id="315456.RF_1108"/>
<dbReference type="KEGG" id="rfe:RF_1108"/>
<dbReference type="eggNOG" id="COG0776">
    <property type="taxonomic scope" value="Bacteria"/>
</dbReference>
<dbReference type="HOGENOM" id="CLU_105066_3_2_5"/>
<dbReference type="Proteomes" id="UP000008548">
    <property type="component" value="Chromosome"/>
</dbReference>
<dbReference type="GO" id="GO:0003677">
    <property type="term" value="F:DNA binding"/>
    <property type="evidence" value="ECO:0007669"/>
    <property type="project" value="UniProtKB-KW"/>
</dbReference>
<dbReference type="GO" id="GO:0030527">
    <property type="term" value="F:structural constituent of chromatin"/>
    <property type="evidence" value="ECO:0007669"/>
    <property type="project" value="InterPro"/>
</dbReference>
<dbReference type="GO" id="GO:0030261">
    <property type="term" value="P:chromosome condensation"/>
    <property type="evidence" value="ECO:0007669"/>
    <property type="project" value="UniProtKB-KW"/>
</dbReference>
<dbReference type="CDD" id="cd13831">
    <property type="entry name" value="HU"/>
    <property type="match status" value="1"/>
</dbReference>
<dbReference type="Gene3D" id="4.10.520.10">
    <property type="entry name" value="IHF-like DNA-binding proteins"/>
    <property type="match status" value="1"/>
</dbReference>
<dbReference type="InterPro" id="IPR000119">
    <property type="entry name" value="Hist_DNA-bd"/>
</dbReference>
<dbReference type="InterPro" id="IPR020816">
    <property type="entry name" value="Histone-like_DNA-bd_CS"/>
</dbReference>
<dbReference type="InterPro" id="IPR010992">
    <property type="entry name" value="IHF-like_DNA-bd_dom_sf"/>
</dbReference>
<dbReference type="PANTHER" id="PTHR33175">
    <property type="entry name" value="DNA-BINDING PROTEIN HU"/>
    <property type="match status" value="1"/>
</dbReference>
<dbReference type="PANTHER" id="PTHR33175:SF3">
    <property type="entry name" value="DNA-BINDING PROTEIN HU-BETA"/>
    <property type="match status" value="1"/>
</dbReference>
<dbReference type="Pfam" id="PF00216">
    <property type="entry name" value="Bac_DNA_binding"/>
    <property type="match status" value="1"/>
</dbReference>
<dbReference type="PRINTS" id="PR01727">
    <property type="entry name" value="DNABINDINGHU"/>
</dbReference>
<dbReference type="SMART" id="SM00411">
    <property type="entry name" value="BHL"/>
    <property type="match status" value="1"/>
</dbReference>
<dbReference type="SUPFAM" id="SSF47729">
    <property type="entry name" value="IHF-like DNA-binding proteins"/>
    <property type="match status" value="1"/>
</dbReference>
<dbReference type="PROSITE" id="PS00045">
    <property type="entry name" value="HISTONE_LIKE"/>
    <property type="match status" value="1"/>
</dbReference>
<reference key="1">
    <citation type="journal article" date="2005" name="PLoS Biol.">
        <title>The genome sequence of Rickettsia felis identifies the first putative conjugative plasmid in an obligate intracellular parasite.</title>
        <authorList>
            <person name="Ogata H."/>
            <person name="Renesto P."/>
            <person name="Audic S."/>
            <person name="Robert C."/>
            <person name="Blanc G."/>
            <person name="Fournier P.-E."/>
            <person name="Parinello H."/>
            <person name="Claverie J.-M."/>
            <person name="Raoult D."/>
        </authorList>
    </citation>
    <scope>NUCLEOTIDE SEQUENCE [LARGE SCALE GENOMIC DNA]</scope>
    <source>
        <strain>ATCC VR-1525 / URRWXCal2</strain>
    </source>
</reference>
<organism>
    <name type="scientific">Rickettsia felis (strain ATCC VR-1525 / URRWXCal2)</name>
    <name type="common">Rickettsia azadi</name>
    <dbReference type="NCBI Taxonomy" id="315456"/>
    <lineage>
        <taxon>Bacteria</taxon>
        <taxon>Pseudomonadati</taxon>
        <taxon>Pseudomonadota</taxon>
        <taxon>Alphaproteobacteria</taxon>
        <taxon>Rickettsiales</taxon>
        <taxon>Rickettsiaceae</taxon>
        <taxon>Rickettsieae</taxon>
        <taxon>Rickettsia</taxon>
        <taxon>spotted fever group</taxon>
    </lineage>
</organism>